<dbReference type="EC" id="3.4.25.2" evidence="2"/>
<dbReference type="EMBL" id="AE014075">
    <property type="protein sequence ID" value="AAN83313.1"/>
    <property type="molecule type" value="Genomic_DNA"/>
</dbReference>
<dbReference type="RefSeq" id="WP_000208242.1">
    <property type="nucleotide sequence ID" value="NZ_CP051263.1"/>
</dbReference>
<dbReference type="SMR" id="P0A7B9"/>
<dbReference type="STRING" id="199310.c4885"/>
<dbReference type="MEROPS" id="T01.006"/>
<dbReference type="GeneID" id="93777966"/>
<dbReference type="KEGG" id="ecc:c4885"/>
<dbReference type="eggNOG" id="COG5405">
    <property type="taxonomic scope" value="Bacteria"/>
</dbReference>
<dbReference type="HOGENOM" id="CLU_093872_1_0_6"/>
<dbReference type="BioCyc" id="ECOL199310:C4885-MONOMER"/>
<dbReference type="BRENDA" id="3.4.25.2">
    <property type="organism ID" value="2026"/>
</dbReference>
<dbReference type="Proteomes" id="UP000001410">
    <property type="component" value="Chromosome"/>
</dbReference>
<dbReference type="GO" id="GO:0009376">
    <property type="term" value="C:HslUV protease complex"/>
    <property type="evidence" value="ECO:0007669"/>
    <property type="project" value="UniProtKB-UniRule"/>
</dbReference>
<dbReference type="GO" id="GO:0005839">
    <property type="term" value="C:proteasome core complex"/>
    <property type="evidence" value="ECO:0007669"/>
    <property type="project" value="InterPro"/>
</dbReference>
<dbReference type="GO" id="GO:0046872">
    <property type="term" value="F:metal ion binding"/>
    <property type="evidence" value="ECO:0007669"/>
    <property type="project" value="UniProtKB-KW"/>
</dbReference>
<dbReference type="GO" id="GO:0004298">
    <property type="term" value="F:threonine-type endopeptidase activity"/>
    <property type="evidence" value="ECO:0007669"/>
    <property type="project" value="UniProtKB-KW"/>
</dbReference>
<dbReference type="GO" id="GO:0051603">
    <property type="term" value="P:proteolysis involved in protein catabolic process"/>
    <property type="evidence" value="ECO:0007669"/>
    <property type="project" value="InterPro"/>
</dbReference>
<dbReference type="CDD" id="cd01913">
    <property type="entry name" value="protease_HslV"/>
    <property type="match status" value="1"/>
</dbReference>
<dbReference type="FunFam" id="3.60.20.10:FF:000002">
    <property type="entry name" value="ATP-dependent protease subunit HslV"/>
    <property type="match status" value="1"/>
</dbReference>
<dbReference type="Gene3D" id="3.60.20.10">
    <property type="entry name" value="Glutamine Phosphoribosylpyrophosphate, subunit 1, domain 1"/>
    <property type="match status" value="1"/>
</dbReference>
<dbReference type="HAMAP" id="MF_00248">
    <property type="entry name" value="HslV"/>
    <property type="match status" value="1"/>
</dbReference>
<dbReference type="InterPro" id="IPR022281">
    <property type="entry name" value="ATP-dep_Prtase_HsIV_su"/>
</dbReference>
<dbReference type="InterPro" id="IPR029055">
    <property type="entry name" value="Ntn_hydrolases_N"/>
</dbReference>
<dbReference type="InterPro" id="IPR001353">
    <property type="entry name" value="Proteasome_sua/b"/>
</dbReference>
<dbReference type="InterPro" id="IPR023333">
    <property type="entry name" value="Proteasome_suB-type"/>
</dbReference>
<dbReference type="NCBIfam" id="TIGR03692">
    <property type="entry name" value="ATP_dep_HslV"/>
    <property type="match status" value="1"/>
</dbReference>
<dbReference type="NCBIfam" id="NF003964">
    <property type="entry name" value="PRK05456.1"/>
    <property type="match status" value="1"/>
</dbReference>
<dbReference type="PANTHER" id="PTHR32194:SF0">
    <property type="entry name" value="ATP-DEPENDENT PROTEASE SUBUNIT HSLV"/>
    <property type="match status" value="1"/>
</dbReference>
<dbReference type="PANTHER" id="PTHR32194">
    <property type="entry name" value="METALLOPROTEASE TLDD"/>
    <property type="match status" value="1"/>
</dbReference>
<dbReference type="Pfam" id="PF00227">
    <property type="entry name" value="Proteasome"/>
    <property type="match status" value="1"/>
</dbReference>
<dbReference type="PIRSF" id="PIRSF039093">
    <property type="entry name" value="HslV"/>
    <property type="match status" value="1"/>
</dbReference>
<dbReference type="SUPFAM" id="SSF56235">
    <property type="entry name" value="N-terminal nucleophile aminohydrolases (Ntn hydrolases)"/>
    <property type="match status" value="1"/>
</dbReference>
<dbReference type="PROSITE" id="PS51476">
    <property type="entry name" value="PROTEASOME_BETA_2"/>
    <property type="match status" value="1"/>
</dbReference>
<keyword id="KW-0021">Allosteric enzyme</keyword>
<keyword id="KW-0963">Cytoplasm</keyword>
<keyword id="KW-0378">Hydrolase</keyword>
<keyword id="KW-0479">Metal-binding</keyword>
<keyword id="KW-0645">Protease</keyword>
<keyword id="KW-1185">Reference proteome</keyword>
<keyword id="KW-0915">Sodium</keyword>
<keyword id="KW-0346">Stress response</keyword>
<keyword id="KW-0888">Threonine protease</keyword>
<feature type="initiator methionine" description="Removed" evidence="1">
    <location>
        <position position="1"/>
    </location>
</feature>
<feature type="chain" id="PRO_0000148107" description="ATP-dependent protease subunit HslV">
    <location>
        <begin position="2"/>
        <end position="176"/>
    </location>
</feature>
<feature type="active site" evidence="2">
    <location>
        <position position="2"/>
    </location>
</feature>
<feature type="binding site" evidence="2">
    <location>
        <position position="157"/>
    </location>
    <ligand>
        <name>Na(+)</name>
        <dbReference type="ChEBI" id="CHEBI:29101"/>
    </ligand>
</feature>
<feature type="binding site" evidence="2">
    <location>
        <position position="160"/>
    </location>
    <ligand>
        <name>Na(+)</name>
        <dbReference type="ChEBI" id="CHEBI:29101"/>
    </ligand>
</feature>
<feature type="binding site" evidence="2">
    <location>
        <position position="163"/>
    </location>
    <ligand>
        <name>Na(+)</name>
        <dbReference type="ChEBI" id="CHEBI:29101"/>
    </ligand>
</feature>
<evidence type="ECO:0000250" key="1"/>
<evidence type="ECO:0000255" key="2">
    <source>
        <dbReference type="HAMAP-Rule" id="MF_00248"/>
    </source>
</evidence>
<comment type="function">
    <text evidence="2">Protease subunit of a proteasome-like degradation complex believed to be a general protein degrading machinery.</text>
</comment>
<comment type="catalytic activity">
    <reaction evidence="2">
        <text>ATP-dependent cleavage of peptide bonds with broad specificity.</text>
        <dbReference type="EC" id="3.4.25.2"/>
    </reaction>
</comment>
<comment type="activity regulation">
    <text evidence="2">Allosterically activated by HslU binding.</text>
</comment>
<comment type="subunit">
    <text evidence="2">A double ring-shaped homohexamer of HslV is capped on each side by a ring-shaped HslU homohexamer. The assembly of the HslU/HslV complex is dependent on binding of ATP.</text>
</comment>
<comment type="subcellular location">
    <subcellularLocation>
        <location evidence="2">Cytoplasm</location>
    </subcellularLocation>
</comment>
<comment type="induction">
    <text evidence="2">By heat shock.</text>
</comment>
<comment type="similarity">
    <text evidence="2">Belongs to the peptidase T1B family. HslV subfamily.</text>
</comment>
<proteinExistence type="inferred from homology"/>
<reference key="1">
    <citation type="journal article" date="2002" name="Proc. Natl. Acad. Sci. U.S.A.">
        <title>Extensive mosaic structure revealed by the complete genome sequence of uropathogenic Escherichia coli.</title>
        <authorList>
            <person name="Welch R.A."/>
            <person name="Burland V."/>
            <person name="Plunkett G. III"/>
            <person name="Redford P."/>
            <person name="Roesch P."/>
            <person name="Rasko D."/>
            <person name="Buckles E.L."/>
            <person name="Liou S.-R."/>
            <person name="Boutin A."/>
            <person name="Hackett J."/>
            <person name="Stroud D."/>
            <person name="Mayhew G.F."/>
            <person name="Rose D.J."/>
            <person name="Zhou S."/>
            <person name="Schwartz D.C."/>
            <person name="Perna N.T."/>
            <person name="Mobley H.L.T."/>
            <person name="Donnenberg M.S."/>
            <person name="Blattner F.R."/>
        </authorList>
    </citation>
    <scope>NUCLEOTIDE SEQUENCE [LARGE SCALE GENOMIC DNA]</scope>
    <source>
        <strain>CFT073 / ATCC 700928 / UPEC</strain>
    </source>
</reference>
<organism>
    <name type="scientific">Escherichia coli O6:H1 (strain CFT073 / ATCC 700928 / UPEC)</name>
    <dbReference type="NCBI Taxonomy" id="199310"/>
    <lineage>
        <taxon>Bacteria</taxon>
        <taxon>Pseudomonadati</taxon>
        <taxon>Pseudomonadota</taxon>
        <taxon>Gammaproteobacteria</taxon>
        <taxon>Enterobacterales</taxon>
        <taxon>Enterobacteriaceae</taxon>
        <taxon>Escherichia</taxon>
    </lineage>
</organism>
<sequence length="176" mass="19093">MTTIVSVRRNGHVVIAGDGQATLGNTVMKGNVKKVRRLYNDKVIAGFAGGTADAFTLFELFERKLEMHQGHLVKAAVELAKDWRTDRMLRKLEALLAVADETASLIITGNGDVVQPENDLIAIGSGGPYAQAAARALLENTELSAREIAEKALDIAGDICIYTNHFHTIEELSYKA</sequence>
<protein>
    <recommendedName>
        <fullName evidence="2">ATP-dependent protease subunit HslV</fullName>
        <ecNumber evidence="2">3.4.25.2</ecNumber>
    </recommendedName>
    <alternativeName>
        <fullName evidence="2">Heat shock protein HslV</fullName>
    </alternativeName>
</protein>
<name>HSLV_ECOL6</name>
<gene>
    <name evidence="2" type="primary">hslV</name>
    <name type="ordered locus">c4885</name>
</gene>
<accession>P0A7B9</accession>
<accession>P31059</accession>
<accession>P97542</accession>